<proteinExistence type="inferred from homology"/>
<dbReference type="EC" id="2.7.4.9"/>
<dbReference type="EMBL" id="AF222894">
    <property type="protein sequence ID" value="AAF30425.1"/>
    <property type="status" value="ALT_INIT"/>
    <property type="molecule type" value="Genomic_DNA"/>
</dbReference>
<dbReference type="PIR" id="H82944">
    <property type="entry name" value="H82944"/>
</dbReference>
<dbReference type="RefSeq" id="WP_006688582.1">
    <property type="nucleotide sequence ID" value="NC_002162.1"/>
</dbReference>
<dbReference type="SMR" id="Q9PRC5"/>
<dbReference type="STRING" id="273119.UU020"/>
<dbReference type="EnsemblBacteria" id="AAF30425">
    <property type="protein sequence ID" value="AAF30425"/>
    <property type="gene ID" value="UU020"/>
</dbReference>
<dbReference type="GeneID" id="29672189"/>
<dbReference type="KEGG" id="uur:UU020"/>
<dbReference type="eggNOG" id="COG0125">
    <property type="taxonomic scope" value="Bacteria"/>
</dbReference>
<dbReference type="HOGENOM" id="CLU_049131_0_2_14"/>
<dbReference type="OrthoDB" id="9774907at2"/>
<dbReference type="Proteomes" id="UP000000423">
    <property type="component" value="Chromosome"/>
</dbReference>
<dbReference type="GO" id="GO:0005829">
    <property type="term" value="C:cytosol"/>
    <property type="evidence" value="ECO:0007669"/>
    <property type="project" value="TreeGrafter"/>
</dbReference>
<dbReference type="GO" id="GO:0005524">
    <property type="term" value="F:ATP binding"/>
    <property type="evidence" value="ECO:0007669"/>
    <property type="project" value="UniProtKB-UniRule"/>
</dbReference>
<dbReference type="GO" id="GO:0004798">
    <property type="term" value="F:dTMP kinase activity"/>
    <property type="evidence" value="ECO:0007669"/>
    <property type="project" value="UniProtKB-UniRule"/>
</dbReference>
<dbReference type="GO" id="GO:0006233">
    <property type="term" value="P:dTDP biosynthetic process"/>
    <property type="evidence" value="ECO:0007669"/>
    <property type="project" value="InterPro"/>
</dbReference>
<dbReference type="GO" id="GO:0006235">
    <property type="term" value="P:dTTP biosynthetic process"/>
    <property type="evidence" value="ECO:0007669"/>
    <property type="project" value="UniProtKB-UniRule"/>
</dbReference>
<dbReference type="GO" id="GO:0006227">
    <property type="term" value="P:dUDP biosynthetic process"/>
    <property type="evidence" value="ECO:0007669"/>
    <property type="project" value="TreeGrafter"/>
</dbReference>
<dbReference type="CDD" id="cd01672">
    <property type="entry name" value="TMPK"/>
    <property type="match status" value="1"/>
</dbReference>
<dbReference type="Gene3D" id="3.40.50.300">
    <property type="entry name" value="P-loop containing nucleotide triphosphate hydrolases"/>
    <property type="match status" value="1"/>
</dbReference>
<dbReference type="HAMAP" id="MF_00165">
    <property type="entry name" value="Thymidylate_kinase"/>
    <property type="match status" value="1"/>
</dbReference>
<dbReference type="InterPro" id="IPR027417">
    <property type="entry name" value="P-loop_NTPase"/>
</dbReference>
<dbReference type="InterPro" id="IPR039430">
    <property type="entry name" value="Thymidylate_kin-like_dom"/>
</dbReference>
<dbReference type="InterPro" id="IPR018094">
    <property type="entry name" value="Thymidylate_kinase"/>
</dbReference>
<dbReference type="NCBIfam" id="TIGR00041">
    <property type="entry name" value="DTMP_kinase"/>
    <property type="match status" value="1"/>
</dbReference>
<dbReference type="PANTHER" id="PTHR10344">
    <property type="entry name" value="THYMIDYLATE KINASE"/>
    <property type="match status" value="1"/>
</dbReference>
<dbReference type="PANTHER" id="PTHR10344:SF4">
    <property type="entry name" value="UMP-CMP KINASE 2, MITOCHONDRIAL"/>
    <property type="match status" value="1"/>
</dbReference>
<dbReference type="Pfam" id="PF02223">
    <property type="entry name" value="Thymidylate_kin"/>
    <property type="match status" value="1"/>
</dbReference>
<dbReference type="SUPFAM" id="SSF52540">
    <property type="entry name" value="P-loop containing nucleoside triphosphate hydrolases"/>
    <property type="match status" value="1"/>
</dbReference>
<protein>
    <recommendedName>
        <fullName>Thymidylate kinase</fullName>
        <ecNumber>2.7.4.9</ecNumber>
    </recommendedName>
    <alternativeName>
        <fullName>dTMP kinase</fullName>
    </alternativeName>
</protein>
<sequence length="230" mass="26900">MILTKNSNEKKPLKKGLFIVFEGIDGAGKTSILKQLLEVLKEPKLVNKIFLTREPGGKNNNAAEMIREFFLKNLEVFDPLTLAYLYASSRAEHVKKTINPHLEKDHIVISDRFVHSSYIYQGIVQNQSLDVIYQINQQAIGELEIDYVFYFDVNVNNALNRMKNRFDNTNAFDSQNKQFYEKLLKQYPSVFKVYNQPKKIIFIDANKNENEVLCEVKEQLLKIFKEHKYI</sequence>
<evidence type="ECO:0000250" key="1"/>
<evidence type="ECO:0000255" key="2"/>
<evidence type="ECO:0000305" key="3"/>
<name>KTHY_UREPA</name>
<comment type="function">
    <text evidence="1">Phosphorylation of dTMP to form dTDP in both de novo and salvage pathways of dTTP synthesis.</text>
</comment>
<comment type="catalytic activity">
    <reaction>
        <text>dTMP + ATP = dTDP + ADP</text>
        <dbReference type="Rhea" id="RHEA:13517"/>
        <dbReference type="ChEBI" id="CHEBI:30616"/>
        <dbReference type="ChEBI" id="CHEBI:58369"/>
        <dbReference type="ChEBI" id="CHEBI:63528"/>
        <dbReference type="ChEBI" id="CHEBI:456216"/>
        <dbReference type="EC" id="2.7.4.9"/>
    </reaction>
</comment>
<comment type="similarity">
    <text evidence="3">Belongs to the thymidylate kinase family.</text>
</comment>
<comment type="sequence caution" evidence="3">
    <conflict type="erroneous initiation">
        <sequence resource="EMBL-CDS" id="AAF30425"/>
    </conflict>
</comment>
<keyword id="KW-0067">ATP-binding</keyword>
<keyword id="KW-0418">Kinase</keyword>
<keyword id="KW-0545">Nucleotide biosynthesis</keyword>
<keyword id="KW-0547">Nucleotide-binding</keyword>
<keyword id="KW-1185">Reference proteome</keyword>
<keyword id="KW-0808">Transferase</keyword>
<gene>
    <name type="primary">tmk</name>
    <name type="ordered locus">UU020</name>
</gene>
<reference key="1">
    <citation type="journal article" date="2000" name="Nature">
        <title>The complete sequence of the mucosal pathogen Ureaplasma urealyticum.</title>
        <authorList>
            <person name="Glass J.I."/>
            <person name="Lefkowitz E.J."/>
            <person name="Glass J.S."/>
            <person name="Heiner C.R."/>
            <person name="Chen E.Y."/>
            <person name="Cassell G.H."/>
        </authorList>
    </citation>
    <scope>NUCLEOTIDE SEQUENCE [LARGE SCALE GENOMIC DNA]</scope>
    <source>
        <strain>ATCC 700970</strain>
    </source>
</reference>
<organism>
    <name type="scientific">Ureaplasma parvum serovar 3 (strain ATCC 700970)</name>
    <dbReference type="NCBI Taxonomy" id="273119"/>
    <lineage>
        <taxon>Bacteria</taxon>
        <taxon>Bacillati</taxon>
        <taxon>Mycoplasmatota</taxon>
        <taxon>Mycoplasmoidales</taxon>
        <taxon>Mycoplasmoidaceae</taxon>
        <taxon>Ureaplasma</taxon>
    </lineage>
</organism>
<accession>Q9PRC5</accession>
<feature type="chain" id="PRO_0000155366" description="Thymidylate kinase">
    <location>
        <begin position="1"/>
        <end position="230"/>
    </location>
</feature>
<feature type="binding site" evidence="2">
    <location>
        <begin position="23"/>
        <end position="30"/>
    </location>
    <ligand>
        <name>ATP</name>
        <dbReference type="ChEBI" id="CHEBI:30616"/>
    </ligand>
</feature>